<keyword id="KW-0002">3D-structure</keyword>
<keyword id="KW-0007">Acetylation</keyword>
<keyword id="KW-0150">Chloroplast</keyword>
<keyword id="KW-0342">GTP-binding</keyword>
<keyword id="KW-0436">Ligase</keyword>
<keyword id="KW-0460">Magnesium</keyword>
<keyword id="KW-0479">Metal-binding</keyword>
<keyword id="KW-0547">Nucleotide-binding</keyword>
<keyword id="KW-0934">Plastid</keyword>
<keyword id="KW-0658">Purine biosynthesis</keyword>
<keyword id="KW-1185">Reference proteome</keyword>
<keyword id="KW-0809">Transit peptide</keyword>
<organism>
    <name type="scientific">Arabidopsis thaliana</name>
    <name type="common">Mouse-ear cress</name>
    <dbReference type="NCBI Taxonomy" id="3702"/>
    <lineage>
        <taxon>Eukaryota</taxon>
        <taxon>Viridiplantae</taxon>
        <taxon>Streptophyta</taxon>
        <taxon>Embryophyta</taxon>
        <taxon>Tracheophyta</taxon>
        <taxon>Spermatophyta</taxon>
        <taxon>Magnoliopsida</taxon>
        <taxon>eudicotyledons</taxon>
        <taxon>Gunneridae</taxon>
        <taxon>Pentapetalae</taxon>
        <taxon>rosids</taxon>
        <taxon>malvids</taxon>
        <taxon>Brassicales</taxon>
        <taxon>Brassicaceae</taxon>
        <taxon>Camelineae</taxon>
        <taxon>Arabidopsis</taxon>
    </lineage>
</organism>
<protein>
    <recommendedName>
        <fullName evidence="1">Adenylosuccinate synthetase, chloroplastic</fullName>
        <shortName evidence="1">AMPSase</shortName>
        <shortName evidence="1">AdSS</shortName>
        <ecNumber evidence="1">6.3.4.4</ecNumber>
    </recommendedName>
    <alternativeName>
        <fullName evidence="1">IMP--aspartate ligase</fullName>
    </alternativeName>
</protein>
<proteinExistence type="evidence at protein level"/>
<gene>
    <name evidence="1" type="primary">PURA</name>
    <name type="ordered locus">At3g57610</name>
    <name type="ORF">F15B8.200</name>
</gene>
<evidence type="ECO:0000255" key="1">
    <source>
        <dbReference type="HAMAP-Rule" id="MF_03125"/>
    </source>
</evidence>
<evidence type="ECO:0000269" key="2">
    <source>
    </source>
</evidence>
<evidence type="ECO:0007744" key="3">
    <source>
    </source>
</evidence>
<evidence type="ECO:0007829" key="4">
    <source>
        <dbReference type="PDB" id="1DJ2"/>
    </source>
</evidence>
<dbReference type="EC" id="6.3.4.4" evidence="1"/>
<dbReference type="EMBL" id="U49389">
    <property type="protein sequence ID" value="AAB16828.1"/>
    <property type="molecule type" value="mRNA"/>
</dbReference>
<dbReference type="EMBL" id="AL049660">
    <property type="protein sequence ID" value="CAB41194.1"/>
    <property type="molecule type" value="Genomic_DNA"/>
</dbReference>
<dbReference type="EMBL" id="CP002686">
    <property type="protein sequence ID" value="AEE79678.1"/>
    <property type="molecule type" value="Genomic_DNA"/>
</dbReference>
<dbReference type="EMBL" id="AY054606">
    <property type="protein sequence ID" value="AAK96797.1"/>
    <property type="molecule type" value="mRNA"/>
</dbReference>
<dbReference type="EMBL" id="AY081461">
    <property type="protein sequence ID" value="AAM10023.1"/>
    <property type="molecule type" value="mRNA"/>
</dbReference>
<dbReference type="PIR" id="T06759">
    <property type="entry name" value="T06759"/>
</dbReference>
<dbReference type="PDB" id="1DJ2">
    <property type="method" value="X-ray"/>
    <property type="resolution" value="2.90 A"/>
    <property type="chains" value="A/B=48-490"/>
</dbReference>
<dbReference type="PDBsum" id="1DJ2"/>
<dbReference type="SMR" id="Q96529"/>
<dbReference type="BioGRID" id="10245">
    <property type="interactions" value="31"/>
</dbReference>
<dbReference type="FunCoup" id="Q96529">
    <property type="interactions" value="3389"/>
</dbReference>
<dbReference type="STRING" id="3702.Q96529"/>
<dbReference type="iPTMnet" id="Q96529"/>
<dbReference type="PaxDb" id="3702-AT3G57610.1"/>
<dbReference type="ProteomicsDB" id="226003"/>
<dbReference type="EnsemblPlants" id="AT3G57610.1">
    <property type="protein sequence ID" value="AT3G57610.1"/>
    <property type="gene ID" value="AT3G57610"/>
</dbReference>
<dbReference type="Gramene" id="AT3G57610.1">
    <property type="protein sequence ID" value="AT3G57610.1"/>
    <property type="gene ID" value="AT3G57610"/>
</dbReference>
<dbReference type="KEGG" id="ath:AT3G57610"/>
<dbReference type="Araport" id="AT3G57610"/>
<dbReference type="TAIR" id="AT3G57610">
    <property type="gene designation" value="ADSS"/>
</dbReference>
<dbReference type="eggNOG" id="KOG1355">
    <property type="taxonomic scope" value="Eukaryota"/>
</dbReference>
<dbReference type="HOGENOM" id="CLU_029848_0_0_1"/>
<dbReference type="InParanoid" id="Q96529"/>
<dbReference type="OMA" id="FHHAKPI"/>
<dbReference type="OrthoDB" id="10265645at2759"/>
<dbReference type="PhylomeDB" id="Q96529"/>
<dbReference type="BioCyc" id="ARA:AT3G57610-MONOMER"/>
<dbReference type="BioCyc" id="MetaCyc:AT3G57610-MONOMER"/>
<dbReference type="BRENDA" id="6.3.4.4">
    <property type="organism ID" value="399"/>
</dbReference>
<dbReference type="UniPathway" id="UPA00075">
    <property type="reaction ID" value="UER00335"/>
</dbReference>
<dbReference type="CD-CODE" id="4299E36E">
    <property type="entry name" value="Nucleolus"/>
</dbReference>
<dbReference type="EvolutionaryTrace" id="Q96529"/>
<dbReference type="PRO" id="PR:Q96529"/>
<dbReference type="Proteomes" id="UP000006548">
    <property type="component" value="Chromosome 3"/>
</dbReference>
<dbReference type="ExpressionAtlas" id="Q96529">
    <property type="expression patterns" value="baseline and differential"/>
</dbReference>
<dbReference type="GO" id="GO:0048046">
    <property type="term" value="C:apoplast"/>
    <property type="evidence" value="ECO:0007005"/>
    <property type="project" value="TAIR"/>
</dbReference>
<dbReference type="GO" id="GO:0009507">
    <property type="term" value="C:chloroplast"/>
    <property type="evidence" value="ECO:0007005"/>
    <property type="project" value="TAIR"/>
</dbReference>
<dbReference type="GO" id="GO:0009570">
    <property type="term" value="C:chloroplast stroma"/>
    <property type="evidence" value="ECO:0007005"/>
    <property type="project" value="TAIR"/>
</dbReference>
<dbReference type="GO" id="GO:0009536">
    <property type="term" value="C:plastid"/>
    <property type="evidence" value="ECO:0007005"/>
    <property type="project" value="TAIR"/>
</dbReference>
<dbReference type="GO" id="GO:0004019">
    <property type="term" value="F:adenylosuccinate synthase activity"/>
    <property type="evidence" value="ECO:0007669"/>
    <property type="project" value="UniProtKB-UniRule"/>
</dbReference>
<dbReference type="GO" id="GO:0005525">
    <property type="term" value="F:GTP binding"/>
    <property type="evidence" value="ECO:0007669"/>
    <property type="project" value="UniProtKB-UniRule"/>
</dbReference>
<dbReference type="GO" id="GO:0000287">
    <property type="term" value="F:magnesium ion binding"/>
    <property type="evidence" value="ECO:0007669"/>
    <property type="project" value="UniProtKB-UniRule"/>
</dbReference>
<dbReference type="GO" id="GO:0044208">
    <property type="term" value="P:'de novo' AMP biosynthetic process"/>
    <property type="evidence" value="ECO:0007669"/>
    <property type="project" value="UniProtKB-UniRule"/>
</dbReference>
<dbReference type="CDD" id="cd03108">
    <property type="entry name" value="AdSS"/>
    <property type="match status" value="1"/>
</dbReference>
<dbReference type="FunFam" id="3.90.170.10:FF:000001">
    <property type="entry name" value="Adenylosuccinate synthetase"/>
    <property type="match status" value="1"/>
</dbReference>
<dbReference type="FunFam" id="1.10.300.10:FF:000002">
    <property type="entry name" value="Adenylosuccinate synthetase, chloroplastic"/>
    <property type="match status" value="1"/>
</dbReference>
<dbReference type="Gene3D" id="3.40.440.10">
    <property type="entry name" value="Adenylosuccinate Synthetase, subunit A, domain 1"/>
    <property type="match status" value="1"/>
</dbReference>
<dbReference type="Gene3D" id="1.10.300.10">
    <property type="entry name" value="Adenylosuccinate Synthetase, subunit A, domain 2"/>
    <property type="match status" value="1"/>
</dbReference>
<dbReference type="Gene3D" id="3.90.170.10">
    <property type="entry name" value="Adenylosuccinate Synthetase, subunit A, domain 3"/>
    <property type="match status" value="1"/>
</dbReference>
<dbReference type="HAMAP" id="MF_00011">
    <property type="entry name" value="Adenylosucc_synth"/>
    <property type="match status" value="1"/>
</dbReference>
<dbReference type="InterPro" id="IPR018220">
    <property type="entry name" value="Adenylosuccin_syn_GTP-bd"/>
</dbReference>
<dbReference type="InterPro" id="IPR033128">
    <property type="entry name" value="Adenylosuccin_syn_Lys_AS"/>
</dbReference>
<dbReference type="InterPro" id="IPR042109">
    <property type="entry name" value="Adenylosuccinate_synth_dom1"/>
</dbReference>
<dbReference type="InterPro" id="IPR042110">
    <property type="entry name" value="Adenylosuccinate_synth_dom2"/>
</dbReference>
<dbReference type="InterPro" id="IPR042111">
    <property type="entry name" value="Adenylosuccinate_synth_dom3"/>
</dbReference>
<dbReference type="InterPro" id="IPR001114">
    <property type="entry name" value="Adenylosuccinate_synthetase"/>
</dbReference>
<dbReference type="InterPro" id="IPR027417">
    <property type="entry name" value="P-loop_NTPase"/>
</dbReference>
<dbReference type="NCBIfam" id="NF002223">
    <property type="entry name" value="PRK01117.1"/>
    <property type="match status" value="1"/>
</dbReference>
<dbReference type="NCBIfam" id="TIGR00184">
    <property type="entry name" value="purA"/>
    <property type="match status" value="1"/>
</dbReference>
<dbReference type="PANTHER" id="PTHR11846">
    <property type="entry name" value="ADENYLOSUCCINATE SYNTHETASE"/>
    <property type="match status" value="1"/>
</dbReference>
<dbReference type="PANTHER" id="PTHR11846:SF0">
    <property type="entry name" value="ADENYLOSUCCINATE SYNTHETASE"/>
    <property type="match status" value="1"/>
</dbReference>
<dbReference type="Pfam" id="PF00709">
    <property type="entry name" value="Adenylsucc_synt"/>
    <property type="match status" value="1"/>
</dbReference>
<dbReference type="SMART" id="SM00788">
    <property type="entry name" value="Adenylsucc_synt"/>
    <property type="match status" value="1"/>
</dbReference>
<dbReference type="SUPFAM" id="SSF52540">
    <property type="entry name" value="P-loop containing nucleoside triphosphate hydrolases"/>
    <property type="match status" value="1"/>
</dbReference>
<dbReference type="PROSITE" id="PS01266">
    <property type="entry name" value="ADENYLOSUCCIN_SYN_1"/>
    <property type="match status" value="1"/>
</dbReference>
<dbReference type="PROSITE" id="PS00513">
    <property type="entry name" value="ADENYLOSUCCIN_SYN_2"/>
    <property type="match status" value="1"/>
</dbReference>
<name>PURA_ARATH</name>
<accession>Q96529</accession>
<comment type="function">
    <text>Plays an important role in the de novo pathway and in the salvage pathway of purine nucleotide biosynthesis. Catalyzes the first committed step in the biosynthesis of AMP from IMP.</text>
</comment>
<comment type="catalytic activity">
    <reaction evidence="1">
        <text>IMP + L-aspartate + GTP = N(6)-(1,2-dicarboxyethyl)-AMP + GDP + phosphate + 2 H(+)</text>
        <dbReference type="Rhea" id="RHEA:15753"/>
        <dbReference type="ChEBI" id="CHEBI:15378"/>
        <dbReference type="ChEBI" id="CHEBI:29991"/>
        <dbReference type="ChEBI" id="CHEBI:37565"/>
        <dbReference type="ChEBI" id="CHEBI:43474"/>
        <dbReference type="ChEBI" id="CHEBI:57567"/>
        <dbReference type="ChEBI" id="CHEBI:58053"/>
        <dbReference type="ChEBI" id="CHEBI:58189"/>
        <dbReference type="EC" id="6.3.4.4"/>
    </reaction>
</comment>
<comment type="cofactor">
    <cofactor evidence="1">
        <name>Mg(2+)</name>
        <dbReference type="ChEBI" id="CHEBI:18420"/>
    </cofactor>
    <text evidence="1">Binds 1 Mg(2+) ion per subunit.</text>
</comment>
<comment type="pathway">
    <text evidence="1">Purine metabolism; AMP biosynthesis via de novo pathway; AMP from IMP: step 1/2.</text>
</comment>
<comment type="subunit">
    <text evidence="1 2">Homodimer.</text>
</comment>
<comment type="subcellular location">
    <subcellularLocation>
        <location>Plastid</location>
        <location>Chloroplast</location>
    </subcellularLocation>
</comment>
<comment type="similarity">
    <text evidence="1">Belongs to the adenylosuccinate synthetase family.</text>
</comment>
<feature type="transit peptide" description="Chloroplast" evidence="3">
    <location>
        <begin position="1"/>
        <end position="45"/>
    </location>
</feature>
<feature type="chain" id="PRO_0000029870" description="Adenylosuccinate synthetase, chloroplastic">
    <location>
        <begin position="46"/>
        <end position="490"/>
    </location>
</feature>
<feature type="active site" description="Proton acceptor" evidence="1">
    <location>
        <position position="78"/>
    </location>
</feature>
<feature type="active site" description="Proton donor" evidence="1">
    <location>
        <position position="106"/>
    </location>
</feature>
<feature type="binding site">
    <location>
        <begin position="77"/>
        <end position="83"/>
    </location>
    <ligand>
        <name>GTP</name>
        <dbReference type="ChEBI" id="CHEBI:37565"/>
    </ligand>
</feature>
<feature type="binding site" description="in other chain" evidence="1">
    <location>
        <begin position="78"/>
        <end position="81"/>
    </location>
    <ligand>
        <name>IMP</name>
        <dbReference type="ChEBI" id="CHEBI:58053"/>
        <note>ligand shared between dimeric partners</note>
    </ligand>
</feature>
<feature type="binding site" evidence="1">
    <location>
        <position position="78"/>
    </location>
    <ligand>
        <name>Mg(2+)</name>
        <dbReference type="ChEBI" id="CHEBI:18420"/>
    </ligand>
</feature>
<feature type="binding site" description="in other chain" evidence="1">
    <location>
        <begin position="103"/>
        <end position="106"/>
    </location>
    <ligand>
        <name>IMP</name>
        <dbReference type="ChEBI" id="CHEBI:58053"/>
        <note>ligand shared between dimeric partners</note>
    </ligand>
</feature>
<feature type="binding site">
    <location>
        <begin position="105"/>
        <end position="107"/>
    </location>
    <ligand>
        <name>GTP</name>
        <dbReference type="ChEBI" id="CHEBI:37565"/>
    </ligand>
</feature>
<feature type="binding site" evidence="1">
    <location>
        <position position="105"/>
    </location>
    <ligand>
        <name>Mg(2+)</name>
        <dbReference type="ChEBI" id="CHEBI:18420"/>
    </ligand>
</feature>
<feature type="binding site" description="in other chain" evidence="1">
    <location>
        <position position="195"/>
    </location>
    <ligand>
        <name>IMP</name>
        <dbReference type="ChEBI" id="CHEBI:58053"/>
        <note>ligand shared between dimeric partners</note>
    </ligand>
</feature>
<feature type="binding site" evidence="1">
    <location>
        <position position="209"/>
    </location>
    <ligand>
        <name>IMP</name>
        <dbReference type="ChEBI" id="CHEBI:58053"/>
        <note>ligand shared between dimeric partners</note>
    </ligand>
</feature>
<feature type="binding site" description="in other chain" evidence="1">
    <location>
        <position position="289"/>
    </location>
    <ligand>
        <name>IMP</name>
        <dbReference type="ChEBI" id="CHEBI:58053"/>
        <note>ligand shared between dimeric partners</note>
    </ligand>
</feature>
<feature type="binding site" description="in other chain" evidence="1">
    <location>
        <position position="304"/>
    </location>
    <ligand>
        <name>IMP</name>
        <dbReference type="ChEBI" id="CHEBI:58053"/>
        <note>ligand shared between dimeric partners</note>
    </ligand>
</feature>
<feature type="binding site" evidence="1">
    <location>
        <begin position="364"/>
        <end position="370"/>
    </location>
    <ligand>
        <name>substrate</name>
    </ligand>
</feature>
<feature type="binding site" description="in other chain" evidence="1">
    <location>
        <position position="368"/>
    </location>
    <ligand>
        <name>IMP</name>
        <dbReference type="ChEBI" id="CHEBI:58053"/>
        <note>ligand shared between dimeric partners</note>
    </ligand>
</feature>
<feature type="binding site" evidence="1">
    <location>
        <position position="370"/>
    </location>
    <ligand>
        <name>GTP</name>
        <dbReference type="ChEBI" id="CHEBI:37565"/>
    </ligand>
</feature>
<feature type="binding site">
    <location>
        <begin position="396"/>
        <end position="398"/>
    </location>
    <ligand>
        <name>GTP</name>
        <dbReference type="ChEBI" id="CHEBI:37565"/>
    </ligand>
</feature>
<feature type="binding site">
    <location>
        <begin position="479"/>
        <end position="481"/>
    </location>
    <ligand>
        <name>GTP</name>
        <dbReference type="ChEBI" id="CHEBI:37565"/>
    </ligand>
</feature>
<feature type="modified residue" description="N-acetylserine" evidence="3">
    <location>
        <position position="46"/>
    </location>
</feature>
<feature type="strand" evidence="4">
    <location>
        <begin position="67"/>
        <end position="77"/>
    </location>
</feature>
<feature type="helix" evidence="4">
    <location>
        <begin position="81"/>
        <end position="88"/>
    </location>
</feature>
<feature type="helix" evidence="4">
    <location>
        <begin position="89"/>
        <end position="91"/>
    </location>
</feature>
<feature type="strand" evidence="4">
    <location>
        <begin position="93"/>
        <end position="97"/>
    </location>
</feature>
<feature type="strand" evidence="4">
    <location>
        <begin position="106"/>
        <end position="109"/>
    </location>
</feature>
<feature type="strand" evidence="4">
    <location>
        <begin position="115"/>
        <end position="121"/>
    </location>
</feature>
<feature type="helix" evidence="4">
    <location>
        <begin position="123"/>
        <end position="126"/>
    </location>
</feature>
<feature type="strand" evidence="4">
    <location>
        <begin position="131"/>
        <end position="134"/>
    </location>
</feature>
<feature type="helix" evidence="4">
    <location>
        <begin position="142"/>
        <end position="153"/>
    </location>
</feature>
<feature type="turn" evidence="4">
    <location>
        <begin position="154"/>
        <end position="156"/>
    </location>
</feature>
<feature type="turn" evidence="4">
    <location>
        <begin position="160"/>
        <end position="162"/>
    </location>
</feature>
<feature type="strand" evidence="4">
    <location>
        <begin position="163"/>
        <end position="171"/>
    </location>
</feature>
<feature type="helix" evidence="4">
    <location>
        <begin position="174"/>
        <end position="186"/>
    </location>
</feature>
<feature type="helix" evidence="4">
    <location>
        <begin position="199"/>
        <end position="207"/>
    </location>
</feature>
<feature type="helix" evidence="4">
    <location>
        <begin position="214"/>
        <end position="218"/>
    </location>
</feature>
<feature type="turn" evidence="4">
    <location>
        <begin position="220"/>
        <end position="222"/>
    </location>
</feature>
<feature type="helix" evidence="4">
    <location>
        <begin position="223"/>
        <end position="237"/>
    </location>
</feature>
<feature type="helix" evidence="4">
    <location>
        <begin position="245"/>
        <end position="262"/>
    </location>
</feature>
<feature type="turn" evidence="4">
    <location>
        <begin position="263"/>
        <end position="265"/>
    </location>
</feature>
<feature type="helix" evidence="4">
    <location>
        <begin position="269"/>
        <end position="278"/>
    </location>
</feature>
<feature type="strand" evidence="4">
    <location>
        <begin position="283"/>
        <end position="290"/>
    </location>
</feature>
<feature type="helix" evidence="4">
    <location>
        <begin position="291"/>
        <end position="293"/>
    </location>
</feature>
<feature type="turn" evidence="4">
    <location>
        <begin position="295"/>
        <end position="297"/>
    </location>
</feature>
<feature type="helix" evidence="4">
    <location>
        <begin position="311"/>
        <end position="315"/>
    </location>
</feature>
<feature type="turn" evidence="4">
    <location>
        <begin position="321"/>
        <end position="323"/>
    </location>
</feature>
<feature type="strand" evidence="4">
    <location>
        <begin position="327"/>
        <end position="341"/>
    </location>
</feature>
<feature type="helix" evidence="4">
    <location>
        <begin position="350"/>
        <end position="359"/>
    </location>
</feature>
<feature type="turn" evidence="4">
    <location>
        <begin position="364"/>
        <end position="366"/>
    </location>
</feature>
<feature type="strand" evidence="4">
    <location>
        <begin position="371"/>
        <end position="376"/>
    </location>
</feature>
<feature type="helix" evidence="4">
    <location>
        <begin position="377"/>
        <end position="387"/>
    </location>
</feature>
<feature type="strand" evidence="4">
    <location>
        <begin position="390"/>
        <end position="395"/>
    </location>
</feature>
<feature type="helix" evidence="4">
    <location>
        <begin position="397"/>
        <end position="402"/>
    </location>
</feature>
<feature type="strand" evidence="4">
    <location>
        <begin position="404"/>
        <end position="413"/>
    </location>
</feature>
<feature type="strand" evidence="4">
    <location>
        <begin position="415"/>
        <end position="417"/>
    </location>
</feature>
<feature type="helix" evidence="4">
    <location>
        <begin position="427"/>
        <end position="432"/>
    </location>
</feature>
<feature type="strand" evidence="4">
    <location>
        <begin position="434"/>
        <end position="441"/>
    </location>
</feature>
<feature type="helix" evidence="4">
    <location>
        <begin position="458"/>
        <end position="471"/>
    </location>
</feature>
<feature type="strand" evidence="4">
    <location>
        <begin position="475"/>
        <end position="479"/>
    </location>
</feature>
<feature type="strand" evidence="4">
    <location>
        <begin position="481"/>
        <end position="485"/>
    </location>
</feature>
<feature type="strand" evidence="4">
    <location>
        <begin position="487"/>
        <end position="489"/>
    </location>
</feature>
<sequence>MSLSSLTLDSNPRFAVGGPYHRRYPPLHHPRSFVSCSAKRPAVSASLSVAADSAATESLGRIGSLSQVSGVLGCQWGDEGKGKLVDILAQHFDIVARCQGGANAGHTIYNSEGKKFALHLVPSGILNEDTTCVIGNGVVVHLPGLFKEIDGLESNGVSCKGRILVSDRAHLLFDFHQEVDGLRESELAKSFIGTTKRGIGPAYSSKVIRNGIRVGDLRHMDTLPQKLDLLLSDAAARFQGFKYTPEMLREEVEAYKRYADRLEPYITDTVHFINDSISQKKKVLVEGGQATMLDIDFGTYPFVTSSSPSAGGICTGLGIAPSVVGDLIGVVKAYTTRVGSGPFPTENLGTGGDLLRLAGQEFGTTTGRPRRCGWLDIVALKFSCQINGFASLNLTKLDVLSDLNEIQLGVAYKRSDGTPVKSFPGDLRLLEELHVEYEVLPGWKSDISSVRNYSDLPKAAQQYVERIEELVGVPIHYIGIGPGRDALIYK</sequence>
<reference key="1">
    <citation type="journal article" date="1996" name="Proc. Natl. Acad. Sci. U.S.A.">
        <title>The mode of action and the structure of a herbicide in complex with its target: binding of activated hydantocidin to the feedback regulation site of adenylosuccinate synthetase.</title>
        <authorList>
            <person name="Fonne-Pfister R."/>
            <person name="Chemla P."/>
            <person name="Ward E."/>
            <person name="Girardet M."/>
            <person name="Kreuz K.E."/>
            <person name="Honzatko R.B."/>
            <person name="Fromm H.J."/>
            <person name="Schaer H.-P."/>
            <person name="Gruetter M.G."/>
            <person name="Cowan-Jacob S.W."/>
        </authorList>
    </citation>
    <scope>NUCLEOTIDE SEQUENCE [MRNA]</scope>
</reference>
<reference key="2">
    <citation type="journal article" date="2000" name="Nature">
        <title>Sequence and analysis of chromosome 3 of the plant Arabidopsis thaliana.</title>
        <authorList>
            <person name="Salanoubat M."/>
            <person name="Lemcke K."/>
            <person name="Rieger M."/>
            <person name="Ansorge W."/>
            <person name="Unseld M."/>
            <person name="Fartmann B."/>
            <person name="Valle G."/>
            <person name="Bloecker H."/>
            <person name="Perez-Alonso M."/>
            <person name="Obermaier B."/>
            <person name="Delseny M."/>
            <person name="Boutry M."/>
            <person name="Grivell L.A."/>
            <person name="Mache R."/>
            <person name="Puigdomenech P."/>
            <person name="De Simone V."/>
            <person name="Choisne N."/>
            <person name="Artiguenave F."/>
            <person name="Robert C."/>
            <person name="Brottier P."/>
            <person name="Wincker P."/>
            <person name="Cattolico L."/>
            <person name="Weissenbach J."/>
            <person name="Saurin W."/>
            <person name="Quetier F."/>
            <person name="Schaefer M."/>
            <person name="Mueller-Auer S."/>
            <person name="Gabel C."/>
            <person name="Fuchs M."/>
            <person name="Benes V."/>
            <person name="Wurmbach E."/>
            <person name="Drzonek H."/>
            <person name="Erfle H."/>
            <person name="Jordan N."/>
            <person name="Bangert S."/>
            <person name="Wiedelmann R."/>
            <person name="Kranz H."/>
            <person name="Voss H."/>
            <person name="Holland R."/>
            <person name="Brandt P."/>
            <person name="Nyakatura G."/>
            <person name="Vezzi A."/>
            <person name="D'Angelo M."/>
            <person name="Pallavicini A."/>
            <person name="Toppo S."/>
            <person name="Simionati B."/>
            <person name="Conrad A."/>
            <person name="Hornischer K."/>
            <person name="Kauer G."/>
            <person name="Loehnert T.-H."/>
            <person name="Nordsiek G."/>
            <person name="Reichelt J."/>
            <person name="Scharfe M."/>
            <person name="Schoen O."/>
            <person name="Bargues M."/>
            <person name="Terol J."/>
            <person name="Climent J."/>
            <person name="Navarro P."/>
            <person name="Collado C."/>
            <person name="Perez-Perez A."/>
            <person name="Ottenwaelder B."/>
            <person name="Duchemin D."/>
            <person name="Cooke R."/>
            <person name="Laudie M."/>
            <person name="Berger-Llauro C."/>
            <person name="Purnelle B."/>
            <person name="Masuy D."/>
            <person name="de Haan M."/>
            <person name="Maarse A.C."/>
            <person name="Alcaraz J.-P."/>
            <person name="Cottet A."/>
            <person name="Casacuberta E."/>
            <person name="Monfort A."/>
            <person name="Argiriou A."/>
            <person name="Flores M."/>
            <person name="Liguori R."/>
            <person name="Vitale D."/>
            <person name="Mannhaupt G."/>
            <person name="Haase D."/>
            <person name="Schoof H."/>
            <person name="Rudd S."/>
            <person name="Zaccaria P."/>
            <person name="Mewes H.-W."/>
            <person name="Mayer K.F.X."/>
            <person name="Kaul S."/>
            <person name="Town C.D."/>
            <person name="Koo H.L."/>
            <person name="Tallon L.J."/>
            <person name="Jenkins J."/>
            <person name="Rooney T."/>
            <person name="Rizzo M."/>
            <person name="Walts A."/>
            <person name="Utterback T."/>
            <person name="Fujii C.Y."/>
            <person name="Shea T.P."/>
            <person name="Creasy T.H."/>
            <person name="Haas B."/>
            <person name="Maiti R."/>
            <person name="Wu D."/>
            <person name="Peterson J."/>
            <person name="Van Aken S."/>
            <person name="Pai G."/>
            <person name="Militscher J."/>
            <person name="Sellers P."/>
            <person name="Gill J.E."/>
            <person name="Feldblyum T.V."/>
            <person name="Preuss D."/>
            <person name="Lin X."/>
            <person name="Nierman W.C."/>
            <person name="Salzberg S.L."/>
            <person name="White O."/>
            <person name="Venter J.C."/>
            <person name="Fraser C.M."/>
            <person name="Kaneko T."/>
            <person name="Nakamura Y."/>
            <person name="Sato S."/>
            <person name="Kato T."/>
            <person name="Asamizu E."/>
            <person name="Sasamoto S."/>
            <person name="Kimura T."/>
            <person name="Idesawa K."/>
            <person name="Kawashima K."/>
            <person name="Kishida Y."/>
            <person name="Kiyokawa C."/>
            <person name="Kohara M."/>
            <person name="Matsumoto M."/>
            <person name="Matsuno A."/>
            <person name="Muraki A."/>
            <person name="Nakayama S."/>
            <person name="Nakazaki N."/>
            <person name="Shinpo S."/>
            <person name="Takeuchi C."/>
            <person name="Wada T."/>
            <person name="Watanabe A."/>
            <person name="Yamada M."/>
            <person name="Yasuda M."/>
            <person name="Tabata S."/>
        </authorList>
    </citation>
    <scope>NUCLEOTIDE SEQUENCE [LARGE SCALE GENOMIC DNA]</scope>
    <source>
        <strain>cv. Columbia</strain>
    </source>
</reference>
<reference key="3">
    <citation type="journal article" date="2017" name="Plant J.">
        <title>Araport11: a complete reannotation of the Arabidopsis thaliana reference genome.</title>
        <authorList>
            <person name="Cheng C.Y."/>
            <person name="Krishnakumar V."/>
            <person name="Chan A.P."/>
            <person name="Thibaud-Nissen F."/>
            <person name="Schobel S."/>
            <person name="Town C.D."/>
        </authorList>
    </citation>
    <scope>GENOME REANNOTATION</scope>
    <source>
        <strain>cv. Columbia</strain>
    </source>
</reference>
<reference key="4">
    <citation type="journal article" date="2003" name="Science">
        <title>Empirical analysis of transcriptional activity in the Arabidopsis genome.</title>
        <authorList>
            <person name="Yamada K."/>
            <person name="Lim J."/>
            <person name="Dale J.M."/>
            <person name="Chen H."/>
            <person name="Shinn P."/>
            <person name="Palm C.J."/>
            <person name="Southwick A.M."/>
            <person name="Wu H.C."/>
            <person name="Kim C.J."/>
            <person name="Nguyen M."/>
            <person name="Pham P.K."/>
            <person name="Cheuk R.F."/>
            <person name="Karlin-Newmann G."/>
            <person name="Liu S.X."/>
            <person name="Lam B."/>
            <person name="Sakano H."/>
            <person name="Wu T."/>
            <person name="Yu G."/>
            <person name="Miranda M."/>
            <person name="Quach H.L."/>
            <person name="Tripp M."/>
            <person name="Chang C.H."/>
            <person name="Lee J.M."/>
            <person name="Toriumi M.J."/>
            <person name="Chan M.M."/>
            <person name="Tang C.C."/>
            <person name="Onodera C.S."/>
            <person name="Deng J.M."/>
            <person name="Akiyama K."/>
            <person name="Ansari Y."/>
            <person name="Arakawa T."/>
            <person name="Banh J."/>
            <person name="Banno F."/>
            <person name="Bowser L."/>
            <person name="Brooks S.Y."/>
            <person name="Carninci P."/>
            <person name="Chao Q."/>
            <person name="Choy N."/>
            <person name="Enju A."/>
            <person name="Goldsmith A.D."/>
            <person name="Gurjal M."/>
            <person name="Hansen N.F."/>
            <person name="Hayashizaki Y."/>
            <person name="Johnson-Hopson C."/>
            <person name="Hsuan V.W."/>
            <person name="Iida K."/>
            <person name="Karnes M."/>
            <person name="Khan S."/>
            <person name="Koesema E."/>
            <person name="Ishida J."/>
            <person name="Jiang P.X."/>
            <person name="Jones T."/>
            <person name="Kawai J."/>
            <person name="Kamiya A."/>
            <person name="Meyers C."/>
            <person name="Nakajima M."/>
            <person name="Narusaka M."/>
            <person name="Seki M."/>
            <person name="Sakurai T."/>
            <person name="Satou M."/>
            <person name="Tamse R."/>
            <person name="Vaysberg M."/>
            <person name="Wallender E.K."/>
            <person name="Wong C."/>
            <person name="Yamamura Y."/>
            <person name="Yuan S."/>
            <person name="Shinozaki K."/>
            <person name="Davis R.W."/>
            <person name="Theologis A."/>
            <person name="Ecker J.R."/>
        </authorList>
    </citation>
    <scope>NUCLEOTIDE SEQUENCE [LARGE SCALE MRNA]</scope>
    <source>
        <strain>cv. Columbia</strain>
    </source>
</reference>
<reference key="5">
    <citation type="journal article" date="2009" name="Plant Physiol.">
        <title>Large-scale Arabidopsis phosphoproteome profiling reveals novel chloroplast kinase substrates and phosphorylation networks.</title>
        <authorList>
            <person name="Reiland S."/>
            <person name="Messerli G."/>
            <person name="Baerenfaller K."/>
            <person name="Gerrits B."/>
            <person name="Endler A."/>
            <person name="Grossmann J."/>
            <person name="Gruissem W."/>
            <person name="Baginsky S."/>
        </authorList>
    </citation>
    <scope>IDENTIFICATION BY MASS SPECTROMETRY [LARGE SCALE ANALYSIS]</scope>
</reference>
<reference key="6">
    <citation type="journal article" date="2012" name="Mol. Cell. Proteomics">
        <title>Comparative large-scale characterisation of plant vs. mammal proteins reveals similar and idiosyncratic N-alpha acetylation features.</title>
        <authorList>
            <person name="Bienvenut W.V."/>
            <person name="Sumpton D."/>
            <person name="Martinez A."/>
            <person name="Lilla S."/>
            <person name="Espagne C."/>
            <person name="Meinnel T."/>
            <person name="Giglione C."/>
        </authorList>
    </citation>
    <scope>ACETYLATION [LARGE SCALE ANALYSIS] AT SER-46</scope>
    <scope>CLEAVAGE OF TRANSIT PEPTIDE [LARGE SCALE ANALYSIS] AFTER ALA-45</scope>
    <scope>IDENTIFICATION BY MASS SPECTROMETRY [LARGE SCALE ANALYSIS]</scope>
</reference>
<reference key="7">
    <citation type="journal article" date="2000" name="J. Mol. Biol.">
        <title>Structures of adenylosuccinate synthetase from Triticum aestivum and Arabidopsis thaliana.</title>
        <authorList>
            <person name="Prade L."/>
            <person name="Cowan-Jacob S.W."/>
            <person name="Chemla P."/>
            <person name="Potter S."/>
            <person name="Ward E."/>
            <person name="Fonne-Pfister R."/>
        </authorList>
    </citation>
    <scope>X-RAY CRYSTALLOGRAPHY (2.9 ANGSTROMS) OF 48-490 IN COMPLEX WITH GDP</scope>
</reference>